<comment type="catalytic activity">
    <reaction evidence="1">
        <text>(6S)-5,6,7,8-tetrahydrofolate + formate + ATP = (6R)-10-formyltetrahydrofolate + ADP + phosphate</text>
        <dbReference type="Rhea" id="RHEA:20221"/>
        <dbReference type="ChEBI" id="CHEBI:15740"/>
        <dbReference type="ChEBI" id="CHEBI:30616"/>
        <dbReference type="ChEBI" id="CHEBI:43474"/>
        <dbReference type="ChEBI" id="CHEBI:57453"/>
        <dbReference type="ChEBI" id="CHEBI:195366"/>
        <dbReference type="ChEBI" id="CHEBI:456216"/>
        <dbReference type="EC" id="6.3.4.3"/>
    </reaction>
</comment>
<comment type="pathway">
    <text evidence="1">One-carbon metabolism; tetrahydrofolate interconversion.</text>
</comment>
<comment type="similarity">
    <text evidence="1">Belongs to the formate--tetrahydrofolate ligase family.</text>
</comment>
<reference key="1">
    <citation type="submission" date="2008-03" db="EMBL/GenBank/DDBJ databases">
        <title>Complete sequence of chromosome of Methylobacterium radiotolerans JCM 2831.</title>
        <authorList>
            <consortium name="US DOE Joint Genome Institute"/>
            <person name="Copeland A."/>
            <person name="Lucas S."/>
            <person name="Lapidus A."/>
            <person name="Glavina del Rio T."/>
            <person name="Dalin E."/>
            <person name="Tice H."/>
            <person name="Bruce D."/>
            <person name="Goodwin L."/>
            <person name="Pitluck S."/>
            <person name="Kiss H."/>
            <person name="Brettin T."/>
            <person name="Detter J.C."/>
            <person name="Han C."/>
            <person name="Kuske C.R."/>
            <person name="Schmutz J."/>
            <person name="Larimer F."/>
            <person name="Land M."/>
            <person name="Hauser L."/>
            <person name="Kyrpides N."/>
            <person name="Mikhailova N."/>
            <person name="Marx C.J."/>
            <person name="Richardson P."/>
        </authorList>
    </citation>
    <scope>NUCLEOTIDE SEQUENCE [LARGE SCALE GENOMIC DNA]</scope>
    <source>
        <strain>ATCC 27329 / DSM 1819 / JCM 2831 / NBRC 15690 / NCIMB 10815 / 0-1</strain>
    </source>
</reference>
<name>FTHS_METRJ</name>
<protein>
    <recommendedName>
        <fullName evidence="1">Formate--tetrahydrofolate ligase</fullName>
        <ecNumber evidence="1">6.3.4.3</ecNumber>
    </recommendedName>
    <alternativeName>
        <fullName evidence="1">Formyltetrahydrofolate synthetase</fullName>
        <shortName evidence="1">FHS</shortName>
        <shortName evidence="1">FTHFS</shortName>
    </alternativeName>
</protein>
<organism>
    <name type="scientific">Methylobacterium radiotolerans (strain ATCC 27329 / DSM 1819 / JCM 2831 / NBRC 15690 / NCIMB 10815 / 0-1)</name>
    <dbReference type="NCBI Taxonomy" id="426355"/>
    <lineage>
        <taxon>Bacteria</taxon>
        <taxon>Pseudomonadati</taxon>
        <taxon>Pseudomonadota</taxon>
        <taxon>Alphaproteobacteria</taxon>
        <taxon>Hyphomicrobiales</taxon>
        <taxon>Methylobacteriaceae</taxon>
        <taxon>Methylobacterium</taxon>
    </lineage>
</organism>
<sequence length="557" mass="59349">MPSDIEIARAATLKPIAQVAEKLGIPDDALHNYGKHIAKIDHGYIAGLESRKPGKLVLVTAISPTPAGEGKTTTTVGLGDALNRIGEKTMICLREPSLGPCFGMKGGAAGGGKAQVVPMEQINLHFTGDFHAITSAHSLAAALIDNHVYWANELNIDVRRIHWRRVVDMNDRALRAITQSLGGVANGFPREDGFDITVASEVMAVFCLAKDLADLEERLGRIVIAETRDRKLVTLKDVKATGAMTVLLKDALQPNLVQTLEGNPALIHGGPFANIAHGCNSVIATRAGLRLADYTVTEAGFGADLGAEKFLDIKCRQAGLTPSAVVVVATIRALKMHGGVDKKNLGAENIDALEKGFANLARHVTNLRGFGLPVVVGVNHFHADTEAEHAKLKELCRERLDVEAITCRHWAEGGAGAEELARAVVKLSQAEPAPIRHAYETESRLTDKIRAIATKLYGAADIQIETKAAGKLATFEKDGYGHLPICMAKTQYSFSTDPTLMGAPEGHIVGVRDVRLSAGAGFVVAICGEIMTMPGLPRVPAADTIRLDANGQIDGLF</sequence>
<proteinExistence type="inferred from homology"/>
<dbReference type="EC" id="6.3.4.3" evidence="1"/>
<dbReference type="EMBL" id="CP001001">
    <property type="protein sequence ID" value="ACB26042.1"/>
    <property type="molecule type" value="Genomic_DNA"/>
</dbReference>
<dbReference type="RefSeq" id="WP_012320998.1">
    <property type="nucleotide sequence ID" value="NC_010505.1"/>
</dbReference>
<dbReference type="SMR" id="B1M0D1"/>
<dbReference type="STRING" id="426355.Mrad2831_4072"/>
<dbReference type="GeneID" id="6140130"/>
<dbReference type="KEGG" id="mrd:Mrad2831_4072"/>
<dbReference type="eggNOG" id="COG2759">
    <property type="taxonomic scope" value="Bacteria"/>
</dbReference>
<dbReference type="HOGENOM" id="CLU_003601_3_3_5"/>
<dbReference type="OrthoDB" id="9761733at2"/>
<dbReference type="UniPathway" id="UPA00193"/>
<dbReference type="Proteomes" id="UP000006589">
    <property type="component" value="Chromosome"/>
</dbReference>
<dbReference type="GO" id="GO:0005524">
    <property type="term" value="F:ATP binding"/>
    <property type="evidence" value="ECO:0007669"/>
    <property type="project" value="UniProtKB-UniRule"/>
</dbReference>
<dbReference type="GO" id="GO:0004329">
    <property type="term" value="F:formate-tetrahydrofolate ligase activity"/>
    <property type="evidence" value="ECO:0007669"/>
    <property type="project" value="UniProtKB-UniRule"/>
</dbReference>
<dbReference type="GO" id="GO:0035999">
    <property type="term" value="P:tetrahydrofolate interconversion"/>
    <property type="evidence" value="ECO:0007669"/>
    <property type="project" value="UniProtKB-UniRule"/>
</dbReference>
<dbReference type="CDD" id="cd00477">
    <property type="entry name" value="FTHFS"/>
    <property type="match status" value="1"/>
</dbReference>
<dbReference type="FunFam" id="3.30.1510.10:FF:000001">
    <property type="entry name" value="Formate--tetrahydrofolate ligase"/>
    <property type="match status" value="1"/>
</dbReference>
<dbReference type="FunFam" id="3.10.410.10:FF:000001">
    <property type="entry name" value="Putative formate--tetrahydrofolate ligase"/>
    <property type="match status" value="1"/>
</dbReference>
<dbReference type="Gene3D" id="3.30.1510.10">
    <property type="entry name" value="Domain 2, N(10)-formyltetrahydrofolate synthetase"/>
    <property type="match status" value="1"/>
</dbReference>
<dbReference type="Gene3D" id="3.10.410.10">
    <property type="entry name" value="Formyltetrahydrofolate synthetase, domain 3"/>
    <property type="match status" value="1"/>
</dbReference>
<dbReference type="Gene3D" id="3.40.50.300">
    <property type="entry name" value="P-loop containing nucleotide triphosphate hydrolases"/>
    <property type="match status" value="1"/>
</dbReference>
<dbReference type="HAMAP" id="MF_01543">
    <property type="entry name" value="FTHFS"/>
    <property type="match status" value="1"/>
</dbReference>
<dbReference type="InterPro" id="IPR000559">
    <property type="entry name" value="Formate_THF_ligase"/>
</dbReference>
<dbReference type="InterPro" id="IPR020628">
    <property type="entry name" value="Formate_THF_ligase_CS"/>
</dbReference>
<dbReference type="InterPro" id="IPR027417">
    <property type="entry name" value="P-loop_NTPase"/>
</dbReference>
<dbReference type="NCBIfam" id="NF010030">
    <property type="entry name" value="PRK13505.1"/>
    <property type="match status" value="1"/>
</dbReference>
<dbReference type="Pfam" id="PF01268">
    <property type="entry name" value="FTHFS"/>
    <property type="match status" value="1"/>
</dbReference>
<dbReference type="SUPFAM" id="SSF52540">
    <property type="entry name" value="P-loop containing nucleoside triphosphate hydrolases"/>
    <property type="match status" value="1"/>
</dbReference>
<dbReference type="PROSITE" id="PS00721">
    <property type="entry name" value="FTHFS_1"/>
    <property type="match status" value="1"/>
</dbReference>
<dbReference type="PROSITE" id="PS00722">
    <property type="entry name" value="FTHFS_2"/>
    <property type="match status" value="1"/>
</dbReference>
<keyword id="KW-0067">ATP-binding</keyword>
<keyword id="KW-0436">Ligase</keyword>
<keyword id="KW-0547">Nucleotide-binding</keyword>
<keyword id="KW-0554">One-carbon metabolism</keyword>
<feature type="chain" id="PRO_1000196816" description="Formate--tetrahydrofolate ligase">
    <location>
        <begin position="1"/>
        <end position="557"/>
    </location>
</feature>
<feature type="binding site" evidence="1">
    <location>
        <begin position="65"/>
        <end position="72"/>
    </location>
    <ligand>
        <name>ATP</name>
        <dbReference type="ChEBI" id="CHEBI:30616"/>
    </ligand>
</feature>
<evidence type="ECO:0000255" key="1">
    <source>
        <dbReference type="HAMAP-Rule" id="MF_01543"/>
    </source>
</evidence>
<accession>B1M0D1</accession>
<gene>
    <name evidence="1" type="primary">fhs</name>
    <name type="ordered locus">Mrad2831_4072</name>
</gene>